<feature type="chain" id="PRO_0000327740" description="Dynactin subunit 6">
    <location>
        <begin position="1"/>
        <end position="180"/>
    </location>
</feature>
<evidence type="ECO:0000250" key="1"/>
<evidence type="ECO:0000250" key="2">
    <source>
        <dbReference type="UniProtKB" id="O00399"/>
    </source>
</evidence>
<evidence type="ECO:0000305" key="3"/>
<protein>
    <recommendedName>
        <fullName>Dynactin subunit 6</fullName>
    </recommendedName>
</protein>
<sequence>MTETSTVSIASSAIVCVEADIKGEVIIKEGCVVHPFVVFDATKGPIYVGENNIFEEYAVIRNNSDGQPMIIGDWNIFQVHSKSSAKYVGSRNVIGVHAVLEDGCSVSDDCSVGAKCTVFSHQNLEPSVSVYAATNLSRTTKTPNMTSPHQIEFLRKILPSYHHLYGKKKAVATASASAAQ</sequence>
<proteinExistence type="inferred from homology"/>
<comment type="function">
    <text evidence="2">Part of the dynactin complex that activates the molecular motor dynein for ultra-processive transport along microtubules.</text>
</comment>
<comment type="subunit">
    <text evidence="2">Subunit of dynactin, a multiprotein complex part of a tripartite complex with dynein and a adapter, such as BICDL1, BICD2 or HOOK3. The dynactin complex is built around ACTR1A/ACTB filament and consists of an actin-related filament composed of a shoulder domain, a pointed end and a barbed end.</text>
</comment>
<comment type="subcellular location">
    <subcellularLocation>
        <location evidence="1">Cytoplasm</location>
        <location evidence="1">Cytoskeleton</location>
    </subcellularLocation>
</comment>
<comment type="similarity">
    <text evidence="3">Belongs to the dynactin subunits 5/6 family. Dynactin subunit 6 subfamily.</text>
</comment>
<gene>
    <name type="primary">dnc-6</name>
    <name type="ORF">Y54E10A.5</name>
</gene>
<name>DCTN6_CAEEL</name>
<organism>
    <name type="scientific">Caenorhabditis elegans</name>
    <dbReference type="NCBI Taxonomy" id="6239"/>
    <lineage>
        <taxon>Eukaryota</taxon>
        <taxon>Metazoa</taxon>
        <taxon>Ecdysozoa</taxon>
        <taxon>Nematoda</taxon>
        <taxon>Chromadorea</taxon>
        <taxon>Rhabditida</taxon>
        <taxon>Rhabditina</taxon>
        <taxon>Rhabditomorpha</taxon>
        <taxon>Rhabditoidea</taxon>
        <taxon>Rhabditidae</taxon>
        <taxon>Peloderinae</taxon>
        <taxon>Caenorhabditis</taxon>
    </lineage>
</organism>
<dbReference type="EMBL" id="FO081614">
    <property type="protein sequence ID" value="CCD72823.1"/>
    <property type="molecule type" value="Genomic_DNA"/>
</dbReference>
<dbReference type="RefSeq" id="NP_491116.2">
    <property type="nucleotide sequence ID" value="NM_058715.9"/>
</dbReference>
<dbReference type="SMR" id="Q9N3F1"/>
<dbReference type="BioGRID" id="37368">
    <property type="interactions" value="7"/>
</dbReference>
<dbReference type="DIP" id="DIP-26053N"/>
<dbReference type="FunCoup" id="Q9N3F1">
    <property type="interactions" value="1755"/>
</dbReference>
<dbReference type="IntAct" id="Q9N3F1">
    <property type="interactions" value="2"/>
</dbReference>
<dbReference type="STRING" id="6239.Y54E10A.5.2"/>
<dbReference type="PaxDb" id="6239-Y54E10A.5.2"/>
<dbReference type="PeptideAtlas" id="Q9N3F1"/>
<dbReference type="EnsemblMetazoa" id="Y54E10A.5.1">
    <property type="protein sequence ID" value="Y54E10A.5.1"/>
    <property type="gene ID" value="WBGene00021827"/>
</dbReference>
<dbReference type="GeneID" id="171891"/>
<dbReference type="KEGG" id="cel:CELE_Y54E10A.5"/>
<dbReference type="UCSC" id="Y54E10A.5.1">
    <property type="organism name" value="c. elegans"/>
</dbReference>
<dbReference type="AGR" id="WB:WBGene00021827"/>
<dbReference type="CTD" id="171891"/>
<dbReference type="WormBase" id="Y54E10A.5">
    <property type="protein sequence ID" value="CE34408"/>
    <property type="gene ID" value="WBGene00021827"/>
    <property type="gene designation" value="dnc-6"/>
</dbReference>
<dbReference type="eggNOG" id="KOG4042">
    <property type="taxonomic scope" value="Eukaryota"/>
</dbReference>
<dbReference type="GeneTree" id="ENSGT00390000017890"/>
<dbReference type="HOGENOM" id="CLU_085418_1_0_1"/>
<dbReference type="InParanoid" id="Q9N3F1"/>
<dbReference type="OMA" id="RCQVGPN"/>
<dbReference type="OrthoDB" id="2355at2759"/>
<dbReference type="PhylomeDB" id="Q9N3F1"/>
<dbReference type="Reactome" id="R-CEL-6807878">
    <property type="pathway name" value="COPI-mediated anterograde transport"/>
</dbReference>
<dbReference type="Reactome" id="R-CEL-6811436">
    <property type="pathway name" value="COPI-independent Golgi-to-ER retrograde traffic"/>
</dbReference>
<dbReference type="PRO" id="PR:Q9N3F1"/>
<dbReference type="Proteomes" id="UP000001940">
    <property type="component" value="Chromosome I"/>
</dbReference>
<dbReference type="Bgee" id="WBGene00021827">
    <property type="expression patterns" value="Expressed in germ line (C elegans) and 4 other cell types or tissues"/>
</dbReference>
<dbReference type="GO" id="GO:0005737">
    <property type="term" value="C:cytoplasm"/>
    <property type="evidence" value="ECO:0007669"/>
    <property type="project" value="UniProtKB-KW"/>
</dbReference>
<dbReference type="GO" id="GO:0005869">
    <property type="term" value="C:dynactin complex"/>
    <property type="evidence" value="ECO:0000314"/>
    <property type="project" value="WormBase"/>
</dbReference>
<dbReference type="GO" id="GO:0070840">
    <property type="term" value="F:dynein complex binding"/>
    <property type="evidence" value="ECO:0000318"/>
    <property type="project" value="GO_Central"/>
</dbReference>
<dbReference type="GO" id="GO:0007052">
    <property type="term" value="P:mitotic spindle organization"/>
    <property type="evidence" value="ECO:0000318"/>
    <property type="project" value="GO_Central"/>
</dbReference>
<dbReference type="CDD" id="cd04646">
    <property type="entry name" value="LbH_Dynactin_6"/>
    <property type="match status" value="1"/>
</dbReference>
<dbReference type="Gene3D" id="2.160.10.10">
    <property type="entry name" value="Hexapeptide repeat proteins"/>
    <property type="match status" value="1"/>
</dbReference>
<dbReference type="InterPro" id="IPR027777">
    <property type="entry name" value="DCTN6"/>
</dbReference>
<dbReference type="InterPro" id="IPR011004">
    <property type="entry name" value="Trimer_LpxA-like_sf"/>
</dbReference>
<dbReference type="PANTHER" id="PTHR13072">
    <property type="entry name" value="DYNACTIN 6"/>
    <property type="match status" value="1"/>
</dbReference>
<dbReference type="PANTHER" id="PTHR13072:SF0">
    <property type="entry name" value="DYNACTIN SUBUNIT 6"/>
    <property type="match status" value="1"/>
</dbReference>
<dbReference type="SUPFAM" id="SSF51161">
    <property type="entry name" value="Trimeric LpxA-like enzymes"/>
    <property type="match status" value="1"/>
</dbReference>
<keyword id="KW-0963">Cytoplasm</keyword>
<keyword id="KW-0206">Cytoskeleton</keyword>
<keyword id="KW-1185">Reference proteome</keyword>
<reference key="1">
    <citation type="journal article" date="1998" name="Science">
        <title>Genome sequence of the nematode C. elegans: a platform for investigating biology.</title>
        <authorList>
            <consortium name="The C. elegans sequencing consortium"/>
        </authorList>
    </citation>
    <scope>NUCLEOTIDE SEQUENCE [LARGE SCALE GENOMIC DNA]</scope>
    <source>
        <strain>Bristol N2</strain>
    </source>
</reference>
<accession>Q9N3F1</accession>